<reference key="1">
    <citation type="journal article" date="1992" name="Nature">
        <title>The complete DNA sequence of yeast chromosome III.</title>
        <authorList>
            <person name="Oliver S.G."/>
            <person name="van der Aart Q.J.M."/>
            <person name="Agostoni-Carbone M.L."/>
            <person name="Aigle M."/>
            <person name="Alberghina L."/>
            <person name="Alexandraki D."/>
            <person name="Antoine G."/>
            <person name="Anwar R."/>
            <person name="Ballesta J.P.G."/>
            <person name="Benit P."/>
            <person name="Berben G."/>
            <person name="Bergantino E."/>
            <person name="Biteau N."/>
            <person name="Bolle P.-A."/>
            <person name="Bolotin-Fukuhara M."/>
            <person name="Brown A."/>
            <person name="Brown A.J.P."/>
            <person name="Buhler J.-M."/>
            <person name="Carcano C."/>
            <person name="Carignani G."/>
            <person name="Cederberg H."/>
            <person name="Chanet R."/>
            <person name="Contreras R."/>
            <person name="Crouzet M."/>
            <person name="Daignan-Fornier B."/>
            <person name="Defoor E."/>
            <person name="Delgado M.D."/>
            <person name="Demolder J."/>
            <person name="Doira C."/>
            <person name="Dubois E."/>
            <person name="Dujon B."/>
            <person name="Duesterhoeft A."/>
            <person name="Erdmann D."/>
            <person name="Esteban M."/>
            <person name="Fabre F."/>
            <person name="Fairhead C."/>
            <person name="Faye G."/>
            <person name="Feldmann H."/>
            <person name="Fiers W."/>
            <person name="Francingues-Gaillard M.-C."/>
            <person name="Franco L."/>
            <person name="Frontali L."/>
            <person name="Fukuhara H."/>
            <person name="Fuller L.J."/>
            <person name="Galland P."/>
            <person name="Gent M.E."/>
            <person name="Gigot D."/>
            <person name="Gilliquet V."/>
            <person name="Glansdorff N."/>
            <person name="Goffeau A."/>
            <person name="Grenson M."/>
            <person name="Grisanti P."/>
            <person name="Grivell L.A."/>
            <person name="de Haan M."/>
            <person name="Haasemann M."/>
            <person name="Hatat D."/>
            <person name="Hoenicka J."/>
            <person name="Hegemann J.H."/>
            <person name="Herbert C.J."/>
            <person name="Hilger F."/>
            <person name="Hohmann S."/>
            <person name="Hollenberg C.P."/>
            <person name="Huse K."/>
            <person name="Iborra F."/>
            <person name="Indge K.J."/>
            <person name="Isono K."/>
            <person name="Jacq C."/>
            <person name="Jacquet M."/>
            <person name="James C.M."/>
            <person name="Jauniaux J.-C."/>
            <person name="Jia Y."/>
            <person name="Jimenez A."/>
            <person name="Kelly A."/>
            <person name="Kleinhans U."/>
            <person name="Kreisl P."/>
            <person name="Lanfranchi G."/>
            <person name="Lewis C."/>
            <person name="van der Linden C.G."/>
            <person name="Lucchini G."/>
            <person name="Lutzenkirchen K."/>
            <person name="Maat M.J."/>
            <person name="Mallet L."/>
            <person name="Mannhaupt G."/>
            <person name="Martegani E."/>
            <person name="Mathieu A."/>
            <person name="Maurer C.T.C."/>
            <person name="McConnell D."/>
            <person name="McKee R.A."/>
            <person name="Messenguy F."/>
            <person name="Mewes H.-W."/>
            <person name="Molemans F."/>
            <person name="Montague M.A."/>
            <person name="Muzi Falconi M."/>
            <person name="Navas L."/>
            <person name="Newlon C.S."/>
            <person name="Noone D."/>
            <person name="Pallier C."/>
            <person name="Panzeri L."/>
            <person name="Pearson B.M."/>
            <person name="Perea J."/>
            <person name="Philippsen P."/>
            <person name="Pierard A."/>
            <person name="Planta R.J."/>
            <person name="Plevani P."/>
            <person name="Poetsch B."/>
            <person name="Pohl F.M."/>
            <person name="Purnelle B."/>
            <person name="Ramezani Rad M."/>
            <person name="Rasmussen S.W."/>
            <person name="Raynal A."/>
            <person name="Remacha M.A."/>
            <person name="Richterich P."/>
            <person name="Roberts A.B."/>
            <person name="Rodriguez F."/>
            <person name="Sanz E."/>
            <person name="Schaaff-Gerstenschlaeger I."/>
            <person name="Scherens B."/>
            <person name="Schweitzer B."/>
            <person name="Shu Y."/>
            <person name="Skala J."/>
            <person name="Slonimski P.P."/>
            <person name="Sor F."/>
            <person name="Soustelle C."/>
            <person name="Spiegelberg R."/>
            <person name="Stateva L.I."/>
            <person name="Steensma H.Y."/>
            <person name="Steiner S."/>
            <person name="Thierry A."/>
            <person name="Thireos G."/>
            <person name="Tzermia M."/>
            <person name="Urrestarazu L.A."/>
            <person name="Valle G."/>
            <person name="Vetter I."/>
            <person name="van Vliet-Reedijk J.C."/>
            <person name="Voet M."/>
            <person name="Volckaert G."/>
            <person name="Vreken P."/>
            <person name="Wang H."/>
            <person name="Warmington J.R."/>
            <person name="von Wettstein D."/>
            <person name="Wicksteed B.L."/>
            <person name="Wilson C."/>
            <person name="Wurst H."/>
            <person name="Xu G."/>
            <person name="Yoshikawa A."/>
            <person name="Zimmermann F.K."/>
            <person name="Sgouros J.G."/>
        </authorList>
    </citation>
    <scope>NUCLEOTIDE SEQUENCE [LARGE SCALE GENOMIC DNA]</scope>
    <source>
        <strain>ATCC 204508 / S288c</strain>
    </source>
</reference>
<reference key="2">
    <citation type="submission" date="1996-01" db="EMBL/GenBank/DDBJ databases">
        <authorList>
            <person name="Gromadka R."/>
        </authorList>
    </citation>
    <scope>SEQUENCE REVISION</scope>
</reference>
<reference key="3">
    <citation type="submission" date="2001-06" db="EMBL/GenBank/DDBJ databases">
        <authorList>
            <person name="Valles G."/>
            <person name="Volckaerts G."/>
        </authorList>
    </citation>
    <scope>SEQUENCE REVISION</scope>
</reference>
<reference key="4">
    <citation type="journal article" date="2014" name="G3 (Bethesda)">
        <title>The reference genome sequence of Saccharomyces cerevisiae: Then and now.</title>
        <authorList>
            <person name="Engel S.R."/>
            <person name="Dietrich F.S."/>
            <person name="Fisk D.G."/>
            <person name="Binkley G."/>
            <person name="Balakrishnan R."/>
            <person name="Costanzo M.C."/>
            <person name="Dwight S.S."/>
            <person name="Hitz B.C."/>
            <person name="Karra K."/>
            <person name="Nash R.S."/>
            <person name="Weng S."/>
            <person name="Wong E.D."/>
            <person name="Lloyd P."/>
            <person name="Skrzypek M.S."/>
            <person name="Miyasato S.R."/>
            <person name="Simison M."/>
            <person name="Cherry J.M."/>
        </authorList>
    </citation>
    <scope>GENOME REANNOTATION</scope>
    <source>
        <strain>ATCC 204508 / S288c</strain>
    </source>
</reference>
<reference key="5">
    <citation type="journal article" date="1990" name="Nucleic Acids Res.">
        <title>The URK1 gene of Saccharomyces cerevisiae encoding uridine kinase.</title>
        <authorList>
            <person name="Kern L."/>
        </authorList>
    </citation>
    <scope>NUCLEOTIDE SEQUENCE [GENOMIC DNA] OF 660-839</scope>
    <source>
        <strain>ATCC 28383 / FL100 / VTT C-80102</strain>
    </source>
</reference>
<reference key="6">
    <citation type="journal article" date="2001" name="Nat. Cell Biol.">
        <title>Mrc1 transduces signals of DNA replication stress to activate Rad53.</title>
        <authorList>
            <person name="Alcasabas A.A."/>
            <person name="Osborn A.J."/>
            <person name="Bachant J."/>
            <person name="Hu F."/>
            <person name="Werler P.J."/>
            <person name="Bousset K."/>
            <person name="Furuya K."/>
            <person name="Diffley J.F."/>
            <person name="Carr A.M."/>
            <person name="Elledge S.J."/>
        </authorList>
    </citation>
    <scope>FUNCTION</scope>
    <scope>PHOSPHORYLATION</scope>
</reference>
<reference key="7">
    <citation type="journal article" date="2003" name="Genes Dev.">
        <title>Mrc1 is a replication fork component whose phosphorylation in response to DNA replication stress activates Rad53.</title>
        <authorList>
            <person name="Osborn A.J."/>
            <person name="Elledge S.J."/>
        </authorList>
    </citation>
    <scope>FUNCTION</scope>
    <scope>SUBCELLULAR LOCATION</scope>
</reference>
<reference key="8">
    <citation type="journal article" date="2003" name="Mol. Cell">
        <title>Assigning function to yeast proteins by integration of technologies.</title>
        <authorList>
            <person name="Hazbun T.R."/>
            <person name="Malmstroem L."/>
            <person name="Anderson S."/>
            <person name="Graczyk B.J."/>
            <person name="Fox B."/>
            <person name="Riffle M."/>
            <person name="Sundin B.A."/>
            <person name="Aranda J.D."/>
            <person name="McDonald W.H."/>
            <person name="Chiu C.-H."/>
            <person name="Snydsman B.E."/>
            <person name="Bradley P."/>
            <person name="Muller E.G.D."/>
            <person name="Fields S."/>
            <person name="Baker D."/>
            <person name="Yates J.R. III"/>
            <person name="Davis T.N."/>
        </authorList>
    </citation>
    <scope>IDENTIFICATION BY MASS SPECTROMETRY</scope>
</reference>
<reference key="9">
    <citation type="journal article" date="2003" name="Nature">
        <title>S-phase checkpoint proteins Tof1 and Mrc1 form a stable replication-pausing complex.</title>
        <authorList>
            <person name="Katou Y."/>
            <person name="Kanoh Y."/>
            <person name="Bando M."/>
            <person name="Noguchi H."/>
            <person name="Tanaka H."/>
            <person name="Ashikari T."/>
            <person name="Sugimoto K."/>
            <person name="Shirahige K."/>
        </authorList>
    </citation>
    <scope>INTERACTION WITH CDC45</scope>
</reference>
<reference key="10">
    <citation type="journal article" date="2003" name="Nature">
        <title>Global analysis of protein expression in yeast.</title>
        <authorList>
            <person name="Ghaemmaghami S."/>
            <person name="Huh W.-K."/>
            <person name="Bower K."/>
            <person name="Howson R.W."/>
            <person name="Belle A."/>
            <person name="Dephoure N."/>
            <person name="O'Shea E.K."/>
            <person name="Weissman J.S."/>
        </authorList>
    </citation>
    <scope>LEVEL OF PROTEIN EXPRESSION [LARGE SCALE ANALYSIS]</scope>
</reference>
<reference key="11">
    <citation type="journal article" date="2007" name="J. Proteome Res.">
        <title>Large-scale phosphorylation analysis of alpha-factor-arrested Saccharomyces cerevisiae.</title>
        <authorList>
            <person name="Li X."/>
            <person name="Gerber S.A."/>
            <person name="Rudner A.D."/>
            <person name="Beausoleil S.A."/>
            <person name="Haas W."/>
            <person name="Villen J."/>
            <person name="Elias J.E."/>
            <person name="Gygi S.P."/>
        </authorList>
    </citation>
    <scope>PHOSPHORYLATION [LARGE SCALE ANALYSIS] AT SER-605 AND SER-607</scope>
    <scope>IDENTIFICATION BY MASS SPECTROMETRY [LARGE SCALE ANALYSIS]</scope>
    <source>
        <strain>ADR376</strain>
    </source>
</reference>
<reference key="12">
    <citation type="journal article" date="2007" name="Proc. Natl. Acad. Sci. U.S.A.">
        <title>Analysis of phosphorylation sites on proteins from Saccharomyces cerevisiae by electron transfer dissociation (ETD) mass spectrometry.</title>
        <authorList>
            <person name="Chi A."/>
            <person name="Huttenhower C."/>
            <person name="Geer L.Y."/>
            <person name="Coon J.J."/>
            <person name="Syka J.E.P."/>
            <person name="Bai D.L."/>
            <person name="Shabanowitz J."/>
            <person name="Burke D.J."/>
            <person name="Troyanskaya O.G."/>
            <person name="Hunt D.F."/>
        </authorList>
    </citation>
    <scope>PHOSPHORYLATION [LARGE SCALE ANALYSIS] AT SER-605 AND THR-609</scope>
    <scope>IDENTIFICATION BY MASS SPECTROMETRY [LARGE SCALE ANALYSIS]</scope>
</reference>
<reference key="13">
    <citation type="journal article" date="2008" name="Mol. Cell. Proteomics">
        <title>A multidimensional chromatography technology for in-depth phosphoproteome analysis.</title>
        <authorList>
            <person name="Albuquerque C.P."/>
            <person name="Smolka M.B."/>
            <person name="Payne S.H."/>
            <person name="Bafna V."/>
            <person name="Eng J."/>
            <person name="Zhou H."/>
        </authorList>
    </citation>
    <scope>PHOSPHORYLATION [LARGE SCALE ANALYSIS] AT SER-144; SER-434 AND SER-911</scope>
    <scope>IDENTIFICATION BY MASS SPECTROMETRY [LARGE SCALE ANALYSIS]</scope>
</reference>
<reference key="14">
    <citation type="journal article" date="2009" name="Science">
        <title>Global analysis of Cdk1 substrate phosphorylation sites provides insights into evolution.</title>
        <authorList>
            <person name="Holt L.J."/>
            <person name="Tuch B.B."/>
            <person name="Villen J."/>
            <person name="Johnson A.D."/>
            <person name="Gygi S.P."/>
            <person name="Morgan D.O."/>
        </authorList>
    </citation>
    <scope>PHOSPHORYLATION [LARGE SCALE ANALYSIS] AT SER-409; SER-411; SER-605; SER-607; SER-801 AND SER-807</scope>
    <scope>IDENTIFICATION BY MASS SPECTROMETRY [LARGE SCALE ANALYSIS]</scope>
</reference>
<sequence>MDDALHALSSLTAKKRTTTYKKVAVPILDENDNTNGNGPNDIDNPPELTGNGFLFANATLNRVKNRLEGKKAPEQNHNNGKDRSENSLPTQLISNLYDGGEELEKSEVKDNSYSEKNVSSSFTQTQRIPVSIQQDKVFNVPIHSVNDGKPTQLIKEDGLVNETSQALKTPLTTGRPGATQRIDSSGATSQTQPIKSIEPQSQIITTSSNHSNALSPKIPIIPTELIGTSPLFQSIQNRGPDTQMDVPPQTAHDEDKTQAIGIPQATHQEQKTQIDTVAQTLQDEVPHTLKIREIQSELASEDSKREKARNVEYKKPQKPIPTKKFFSKESFLADFDDSSSNEDDDIKLENAHPKPVQNDDELHENKSVELNLTDETRINEKRVPLLSSYANNLKREIDSSKCITLDLDSDSDEYGDDDMDSIKLSKDESVLPISQLSKATILNLKARLSKQNQKLSQRPNKSKDPKVDHNVLLNTLRKASRKQILDHQKEVIETKGLKLEDMAKEKEIVENLLEQEILRNKRIRQKEKRREKLEENDFQLNAHDSGSDSGSESSGFALSGNEIADYESSGSENDNRRESDSEKEDDEIILKQKKSHHVKHIINESDSDTEVEAKPKEKADESLPKRIAINLGHYGDNIGEDTDKFQETNVLDTQNIEEVMAERNTIENEVKDDVYVNEEADEAIRRQLIDKEKLQLKQKEKEHEAKIKELKKRGVTNFFEMEAEESEDEWHGIGGADGEGSDDYDSDLEKMIDDYSKNNFNPHEIREMLAAENKEMDIKMINKILYDIKNGGFRNKRAKNSLELELSDDDEDDVLQQYRLKRRELMRKRRLEIGDDAKLVKNPKSSAFFESMVEDIIEYKNPFGAEEEYNLDITSTATDLDTQDNSINVGDNTGNNEQKPVDQKNKKVIISEDFVQKSLSFLKSNNYEDFETDKELSRIQHGNDEAIEDLYTLKQNSSIKSFTNSQTDSTTSKTVNTIIDLEKRPEDEDEVENGDTSLVGVFKHPSIIKSFASRTDINDKFKEGNKTVKILKSYKTVGSSKASITYMGKTRKLIAPKRKTEGSHRYHHDHHNKKMKMKTKTKSNKLFESGQDSFDN</sequence>
<organism>
    <name type="scientific">Saccharomyces cerevisiae (strain ATCC 204508 / S288c)</name>
    <name type="common">Baker's yeast</name>
    <dbReference type="NCBI Taxonomy" id="559292"/>
    <lineage>
        <taxon>Eukaryota</taxon>
        <taxon>Fungi</taxon>
        <taxon>Dikarya</taxon>
        <taxon>Ascomycota</taxon>
        <taxon>Saccharomycotina</taxon>
        <taxon>Saccharomycetes</taxon>
        <taxon>Saccharomycetales</taxon>
        <taxon>Saccharomycetaceae</taxon>
        <taxon>Saccharomyces</taxon>
    </lineage>
</organism>
<dbReference type="EMBL" id="X59720">
    <property type="protein sequence ID" value="CAC42953.1"/>
    <property type="molecule type" value="Genomic_DNA"/>
</dbReference>
<dbReference type="EMBL" id="X53998">
    <property type="protein sequence ID" value="CAA37945.1"/>
    <property type="molecule type" value="Genomic_DNA"/>
</dbReference>
<dbReference type="EMBL" id="BK006937">
    <property type="protein sequence ID" value="DAA07425.1"/>
    <property type="molecule type" value="Genomic_DNA"/>
</dbReference>
<dbReference type="PIR" id="S74279">
    <property type="entry name" value="S74279"/>
</dbReference>
<dbReference type="RefSeq" id="NP_009871.2">
    <property type="nucleotide sequence ID" value="NM_001178704.1"/>
</dbReference>
<dbReference type="PDB" id="8B9A">
    <property type="method" value="EM"/>
    <property type="resolution" value="3.50 A"/>
    <property type="chains" value="P=1-1096"/>
</dbReference>
<dbReference type="PDB" id="8B9B">
    <property type="method" value="EM"/>
    <property type="resolution" value="3.50 A"/>
    <property type="chains" value="P=1-1096"/>
</dbReference>
<dbReference type="PDB" id="8B9C">
    <property type="method" value="EM"/>
    <property type="resolution" value="4.60 A"/>
    <property type="chains" value="P=1-1096"/>
</dbReference>
<dbReference type="PDB" id="8XGC">
    <property type="method" value="EM"/>
    <property type="resolution" value="3.70 A"/>
    <property type="chains" value="K=1-1096"/>
</dbReference>
<dbReference type="PDBsum" id="8B9A"/>
<dbReference type="PDBsum" id="8B9B"/>
<dbReference type="PDBsum" id="8B9C"/>
<dbReference type="PDBsum" id="8XGC"/>
<dbReference type="EMDB" id="EMD-15924"/>
<dbReference type="EMDB" id="EMD-38317"/>
<dbReference type="SMR" id="P25588"/>
<dbReference type="BioGRID" id="30926">
    <property type="interactions" value="486"/>
</dbReference>
<dbReference type="DIP" id="DIP-1017N"/>
<dbReference type="FunCoup" id="P25588">
    <property type="interactions" value="346"/>
</dbReference>
<dbReference type="IntAct" id="P25588">
    <property type="interactions" value="22"/>
</dbReference>
<dbReference type="MINT" id="P25588"/>
<dbReference type="STRING" id="4932.YCL061C"/>
<dbReference type="CarbonylDB" id="P25588"/>
<dbReference type="GlyGen" id="P25588">
    <property type="glycosylation" value="2 sites, 1 O-linked glycan (2 sites)"/>
</dbReference>
<dbReference type="iPTMnet" id="P25588"/>
<dbReference type="PaxDb" id="4932-YCL061C"/>
<dbReference type="PeptideAtlas" id="P25588"/>
<dbReference type="EnsemblFungi" id="YCL061C_mRNA">
    <property type="protein sequence ID" value="YCL061C"/>
    <property type="gene ID" value="YCL061C"/>
</dbReference>
<dbReference type="GeneID" id="850297"/>
<dbReference type="KEGG" id="sce:YCL061C"/>
<dbReference type="AGR" id="SGD:S000000566"/>
<dbReference type="SGD" id="S000000566">
    <property type="gene designation" value="MRC1"/>
</dbReference>
<dbReference type="VEuPathDB" id="FungiDB:YCL061C"/>
<dbReference type="eggNOG" id="ENOG502QSP5">
    <property type="taxonomic scope" value="Eukaryota"/>
</dbReference>
<dbReference type="HOGENOM" id="CLU_007004_0_0_1"/>
<dbReference type="InParanoid" id="P25588"/>
<dbReference type="OMA" id="NPHEIRE"/>
<dbReference type="OrthoDB" id="2130597at2759"/>
<dbReference type="BioCyc" id="YEAST:G3O-29311-MONOMER"/>
<dbReference type="Reactome" id="R-SCE-176187">
    <property type="pathway name" value="Activation of ATR in response to replication stress"/>
</dbReference>
<dbReference type="Reactome" id="R-SCE-5689880">
    <property type="pathway name" value="Ub-specific processing proteases"/>
</dbReference>
<dbReference type="BioGRID-ORCS" id="850297">
    <property type="hits" value="4 hits in 10 CRISPR screens"/>
</dbReference>
<dbReference type="PRO" id="PR:P25588"/>
<dbReference type="Proteomes" id="UP000002311">
    <property type="component" value="Chromosome III"/>
</dbReference>
<dbReference type="RNAct" id="P25588">
    <property type="molecule type" value="protein"/>
</dbReference>
<dbReference type="GO" id="GO:0000781">
    <property type="term" value="C:chromosome, telomeric region"/>
    <property type="evidence" value="ECO:0007669"/>
    <property type="project" value="GOC"/>
</dbReference>
<dbReference type="GO" id="GO:0034399">
    <property type="term" value="C:nuclear periphery"/>
    <property type="evidence" value="ECO:0000314"/>
    <property type="project" value="SGD"/>
</dbReference>
<dbReference type="GO" id="GO:0043596">
    <property type="term" value="C:nuclear replication fork"/>
    <property type="evidence" value="ECO:0000314"/>
    <property type="project" value="SGD"/>
</dbReference>
<dbReference type="GO" id="GO:0005634">
    <property type="term" value="C:nucleus"/>
    <property type="evidence" value="ECO:0007005"/>
    <property type="project" value="SGD"/>
</dbReference>
<dbReference type="GO" id="GO:0031298">
    <property type="term" value="C:replication fork protection complex"/>
    <property type="evidence" value="ECO:0000314"/>
    <property type="project" value="SGD"/>
</dbReference>
<dbReference type="GO" id="GO:0010997">
    <property type="term" value="F:anaphase-promoting complex binding"/>
    <property type="evidence" value="ECO:0000318"/>
    <property type="project" value="GO_Central"/>
</dbReference>
<dbReference type="GO" id="GO:0071470">
    <property type="term" value="P:cellular response to osmotic stress"/>
    <property type="evidence" value="ECO:0000315"/>
    <property type="project" value="SGD"/>
</dbReference>
<dbReference type="GO" id="GO:0006281">
    <property type="term" value="P:DNA repair"/>
    <property type="evidence" value="ECO:0000315"/>
    <property type="project" value="SGD"/>
</dbReference>
<dbReference type="GO" id="GO:0006260">
    <property type="term" value="P:DNA replication"/>
    <property type="evidence" value="ECO:0000315"/>
    <property type="project" value="SGD"/>
</dbReference>
<dbReference type="GO" id="GO:0000076">
    <property type="term" value="P:DNA replication checkpoint signaling"/>
    <property type="evidence" value="ECO:0000315"/>
    <property type="project" value="SGD"/>
</dbReference>
<dbReference type="GO" id="GO:0043570">
    <property type="term" value="P:maintenance of DNA repeat elements"/>
    <property type="evidence" value="ECO:0000315"/>
    <property type="project" value="SGD"/>
</dbReference>
<dbReference type="GO" id="GO:0033314">
    <property type="term" value="P:mitotic DNA replication checkpoint signaling"/>
    <property type="evidence" value="ECO:0000318"/>
    <property type="project" value="GO_Central"/>
</dbReference>
<dbReference type="GO" id="GO:0007095">
    <property type="term" value="P:mitotic G2 DNA damage checkpoint signaling"/>
    <property type="evidence" value="ECO:0000318"/>
    <property type="project" value="GO_Central"/>
</dbReference>
<dbReference type="GO" id="GO:0031573">
    <property type="term" value="P:mitotic intra-S DNA damage checkpoint signaling"/>
    <property type="evidence" value="ECO:0000315"/>
    <property type="project" value="SGD"/>
</dbReference>
<dbReference type="GO" id="GO:0007064">
    <property type="term" value="P:mitotic sister chromatid cohesion"/>
    <property type="evidence" value="ECO:0000315"/>
    <property type="project" value="SGD"/>
</dbReference>
<dbReference type="GO" id="GO:0050821">
    <property type="term" value="P:protein stabilization"/>
    <property type="evidence" value="ECO:0000314"/>
    <property type="project" value="SGD"/>
</dbReference>
<dbReference type="GO" id="GO:0033262">
    <property type="term" value="P:regulation of nuclear cell cycle DNA replication"/>
    <property type="evidence" value="ECO:0000315"/>
    <property type="project" value="SGD"/>
</dbReference>
<dbReference type="GO" id="GO:0031297">
    <property type="term" value="P:replication fork processing"/>
    <property type="evidence" value="ECO:0000315"/>
    <property type="project" value="SGD"/>
</dbReference>
<dbReference type="GO" id="GO:0030466">
    <property type="term" value="P:silent mating-type cassette heterochromatin formation"/>
    <property type="evidence" value="ECO:0000315"/>
    <property type="project" value="SGD"/>
</dbReference>
<dbReference type="GO" id="GO:0031509">
    <property type="term" value="P:subtelomeric heterochromatin formation"/>
    <property type="evidence" value="ECO:0000315"/>
    <property type="project" value="SGD"/>
</dbReference>
<dbReference type="GO" id="GO:0000723">
    <property type="term" value="P:telomere maintenance"/>
    <property type="evidence" value="ECO:0000315"/>
    <property type="project" value="SGD"/>
</dbReference>
<dbReference type="InterPro" id="IPR024146">
    <property type="entry name" value="Claspin"/>
</dbReference>
<dbReference type="InterPro" id="IPR018564">
    <property type="entry name" value="Repl_chkpnt_MRC1_dom"/>
</dbReference>
<dbReference type="PANTHER" id="PTHR14396">
    <property type="entry name" value="CLASPIN"/>
    <property type="match status" value="1"/>
</dbReference>
<dbReference type="PANTHER" id="PTHR14396:SF10">
    <property type="entry name" value="CLASPIN"/>
    <property type="match status" value="1"/>
</dbReference>
<dbReference type="Pfam" id="PF09444">
    <property type="entry name" value="MRC1"/>
    <property type="match status" value="1"/>
</dbReference>
<comment type="function">
    <text evidence="3 4">Required for normal DNA replication. Phosphorylated in response to DNA replication stress. Phosphorylation allows it to mediate the activation of RAD53.</text>
</comment>
<comment type="subunit">
    <text evidence="5">Interacts with CDC45 in S phase.</text>
</comment>
<comment type="interaction">
    <interactant intactId="EBI-412442">
        <id>P25588</id>
    </interactant>
    <interactant intactId="EBI-4292">
        <id>Q08032</id>
        <label>CDC45</label>
    </interactant>
    <organismsDiffer>false</organismsDiffer>
    <experiments>4</experiments>
</comment>
<comment type="interaction">
    <interactant intactId="EBI-412442">
        <id>P25588</id>
    </interactant>
    <interactant intactId="EBI-31943">
        <id>Q08496</id>
        <label>DIA2</label>
    </interactant>
    <organismsDiffer>false</organismsDiffer>
    <experiments>11</experiments>
</comment>
<comment type="interaction">
    <interactant intactId="EBI-412442">
        <id>P25588</id>
    </interactant>
    <interactant intactId="EBI-8437">
        <id>P32485</id>
        <label>HOG1</label>
    </interactant>
    <organismsDiffer>false</organismsDiffer>
    <experiments>4</experiments>
</comment>
<comment type="interaction">
    <interactant intactId="EBI-412442">
        <id>P25588</id>
    </interactant>
    <interactant intactId="EBI-28887">
        <id>P53919</id>
        <label>NAF1</label>
    </interactant>
    <organismsDiffer>false</organismsDiffer>
    <experiments>2</experiments>
</comment>
<comment type="interaction">
    <interactant intactId="EBI-412442">
        <id>P25588</id>
    </interactant>
    <interactant intactId="EBI-28257">
        <id>P53840</id>
        <label>TOF1</label>
    </interactant>
    <organismsDiffer>false</organismsDiffer>
    <experiments>4</experiments>
</comment>
<comment type="subcellular location">
    <subcellularLocation>
        <location evidence="4">Nucleus</location>
    </subcellularLocation>
    <text>Associated with chromatin during S phase.</text>
</comment>
<comment type="PTM">
    <text evidence="3">Phosphorylated by MEC1 and RAD53.</text>
</comment>
<comment type="miscellaneous">
    <text evidence="6">Present with 721 molecules/cell in log phase SD medium.</text>
</comment>
<protein>
    <recommendedName>
        <fullName>Mediator of replication checkpoint protein 1</fullName>
    </recommendedName>
    <alternativeName>
        <fullName>DNA replication checkpoint mediator MRC1</fullName>
    </alternativeName>
</protein>
<proteinExistence type="evidence at protein level"/>
<evidence type="ECO:0000255" key="1"/>
<evidence type="ECO:0000256" key="2">
    <source>
        <dbReference type="SAM" id="MobiDB-lite"/>
    </source>
</evidence>
<evidence type="ECO:0000269" key="3">
    <source>
    </source>
</evidence>
<evidence type="ECO:0000269" key="4">
    <source>
    </source>
</evidence>
<evidence type="ECO:0000269" key="5">
    <source>
    </source>
</evidence>
<evidence type="ECO:0000269" key="6">
    <source>
    </source>
</evidence>
<evidence type="ECO:0000305" key="7"/>
<evidence type="ECO:0007744" key="8">
    <source>
    </source>
</evidence>
<evidence type="ECO:0007744" key="9">
    <source>
    </source>
</evidence>
<evidence type="ECO:0007744" key="10">
    <source>
    </source>
</evidence>
<evidence type="ECO:0007744" key="11">
    <source>
    </source>
</evidence>
<gene>
    <name type="primary">MRC1</name>
    <name type="ordered locus">YCL061C</name>
    <name type="ORF">YCL61C/YCL60C</name>
</gene>
<keyword id="KW-0002">3D-structure</keyword>
<keyword id="KW-0175">Coiled coil</keyword>
<keyword id="KW-0235">DNA replication</keyword>
<keyword id="KW-0539">Nucleus</keyword>
<keyword id="KW-0597">Phosphoprotein</keyword>
<keyword id="KW-1185">Reference proteome</keyword>
<name>MRC1_YEAST</name>
<accession>P25588</accession>
<accession>D6VQV6</accession>
<accession>P25589</accession>
<accession>P27513</accession>
<accession>P87003</accession>
<accession>Q07218</accession>
<accession>Q8NIN2</accession>
<feature type="chain" id="PRO_0000096574" description="Mediator of replication checkpoint protein 1">
    <location>
        <begin position="1"/>
        <end position="1096"/>
    </location>
</feature>
<feature type="region of interest" description="Disordered" evidence="2">
    <location>
        <begin position="68"/>
        <end position="90"/>
    </location>
</feature>
<feature type="region of interest" description="Disordered" evidence="2">
    <location>
        <begin position="166"/>
        <end position="200"/>
    </location>
</feature>
<feature type="region of interest" description="Disordered" evidence="2">
    <location>
        <begin position="294"/>
        <end position="316"/>
    </location>
</feature>
<feature type="region of interest" description="Disordered" evidence="2">
    <location>
        <begin position="336"/>
        <end position="365"/>
    </location>
</feature>
<feature type="region of interest" description="Disordered" evidence="2">
    <location>
        <begin position="527"/>
        <end position="620"/>
    </location>
</feature>
<feature type="region of interest" description="Disordered" evidence="2">
    <location>
        <begin position="724"/>
        <end position="743"/>
    </location>
</feature>
<feature type="region of interest" description="Disordered" evidence="2">
    <location>
        <begin position="881"/>
        <end position="903"/>
    </location>
</feature>
<feature type="region of interest" description="Disordered" evidence="2">
    <location>
        <begin position="1058"/>
        <end position="1096"/>
    </location>
</feature>
<feature type="coiled-coil region" evidence="1">
    <location>
        <begin position="488"/>
        <end position="542"/>
    </location>
</feature>
<feature type="coiled-coil region" evidence="1">
    <location>
        <begin position="652"/>
        <end position="716"/>
    </location>
</feature>
<feature type="compositionally biased region" description="Basic and acidic residues" evidence="2">
    <location>
        <begin position="68"/>
        <end position="85"/>
    </location>
</feature>
<feature type="compositionally biased region" description="Polar residues" evidence="2">
    <location>
        <begin position="181"/>
        <end position="200"/>
    </location>
</feature>
<feature type="compositionally biased region" description="Basic and acidic residues" evidence="2">
    <location>
        <begin position="294"/>
        <end position="315"/>
    </location>
</feature>
<feature type="compositionally biased region" description="Acidic residues" evidence="2">
    <location>
        <begin position="336"/>
        <end position="346"/>
    </location>
</feature>
<feature type="compositionally biased region" description="Low complexity" evidence="2">
    <location>
        <begin position="547"/>
        <end position="560"/>
    </location>
</feature>
<feature type="compositionally biased region" description="Basic residues" evidence="2">
    <location>
        <begin position="591"/>
        <end position="600"/>
    </location>
</feature>
<feature type="compositionally biased region" description="Basic and acidic residues" evidence="2">
    <location>
        <begin position="611"/>
        <end position="620"/>
    </location>
</feature>
<feature type="compositionally biased region" description="Polar residues" evidence="2">
    <location>
        <begin position="881"/>
        <end position="898"/>
    </location>
</feature>
<feature type="compositionally biased region" description="Basic residues" evidence="2">
    <location>
        <begin position="1065"/>
        <end position="1083"/>
    </location>
</feature>
<feature type="modified residue" description="Phosphoserine" evidence="10">
    <location>
        <position position="144"/>
    </location>
</feature>
<feature type="modified residue" description="Phosphoserine" evidence="11">
    <location>
        <position position="409"/>
    </location>
</feature>
<feature type="modified residue" description="Phosphoserine" evidence="11">
    <location>
        <position position="411"/>
    </location>
</feature>
<feature type="modified residue" description="Phosphoserine" evidence="10">
    <location>
        <position position="434"/>
    </location>
</feature>
<feature type="modified residue" description="Phosphoserine" evidence="8 9 11">
    <location>
        <position position="605"/>
    </location>
</feature>
<feature type="modified residue" description="Phosphoserine" evidence="9 11">
    <location>
        <position position="607"/>
    </location>
</feature>
<feature type="modified residue" description="Phosphothreonine" evidence="8">
    <location>
        <position position="609"/>
    </location>
</feature>
<feature type="modified residue" description="Phosphoserine" evidence="11">
    <location>
        <position position="801"/>
    </location>
</feature>
<feature type="modified residue" description="Phosphoserine" evidence="11">
    <location>
        <position position="807"/>
    </location>
</feature>
<feature type="modified residue" description="Phosphoserine" evidence="10">
    <location>
        <position position="911"/>
    </location>
</feature>
<feature type="sequence conflict" description="In Ref. 5; CAA37945." evidence="7" ref="5">
    <original>L</original>
    <variation>V</variation>
    <location>
        <position position="748"/>
    </location>
</feature>
<feature type="sequence conflict" description="In Ref. 5; CAA37945." evidence="7" ref="5">
    <location>
        <position position="808"/>
    </location>
</feature>